<comment type="function">
    <text evidence="1">The 26S proteasome is involved in the ATP-dependent degradation of ubiquitinated proteins. The regulatory (or ATPase) complex confers ATP dependency and substrate specificity to the 26S complex (By similarity).</text>
</comment>
<comment type="subcellular location">
    <subcellularLocation>
        <location evidence="4">Cytoplasm</location>
    </subcellularLocation>
    <subcellularLocation>
        <location evidence="4">Nucleus</location>
    </subcellularLocation>
</comment>
<comment type="similarity">
    <text evidence="4">Belongs to the AAA ATPase family.</text>
</comment>
<organism>
    <name type="scientific">Schizosaccharomyces pombe (strain 972 / ATCC 24843)</name>
    <name type="common">Fission yeast</name>
    <dbReference type="NCBI Taxonomy" id="284812"/>
    <lineage>
        <taxon>Eukaryota</taxon>
        <taxon>Fungi</taxon>
        <taxon>Dikarya</taxon>
        <taxon>Ascomycota</taxon>
        <taxon>Taphrinomycotina</taxon>
        <taxon>Schizosaccharomycetes</taxon>
        <taxon>Schizosaccharomycetales</taxon>
        <taxon>Schizosaccharomycetaceae</taxon>
        <taxon>Schizosaccharomyces</taxon>
    </lineage>
</organism>
<feature type="chain" id="PRO_0000084707" description="26S proteasome regulatory subunit 6A">
    <location>
        <begin position="1"/>
        <end position="438"/>
    </location>
</feature>
<feature type="region of interest" description="Disordered" evidence="3">
    <location>
        <begin position="1"/>
        <end position="24"/>
    </location>
</feature>
<feature type="compositionally biased region" description="Polar residues" evidence="3">
    <location>
        <begin position="11"/>
        <end position="22"/>
    </location>
</feature>
<feature type="binding site" evidence="2">
    <location>
        <begin position="226"/>
        <end position="233"/>
    </location>
    <ligand>
        <name>ATP</name>
        <dbReference type="ChEBI" id="CHEBI:30616"/>
    </ligand>
</feature>
<gene>
    <name type="primary">tbp1</name>
    <name type="synonym">pam2</name>
    <name type="ORF">SPAC3A11.12c</name>
    <name type="ORF">SPAC3H5.01</name>
</gene>
<proteinExistence type="inferred from homology"/>
<accession>O14126</accession>
<name>PRS6A_SCHPO</name>
<keyword id="KW-0067">ATP-binding</keyword>
<keyword id="KW-0963">Cytoplasm</keyword>
<keyword id="KW-0547">Nucleotide-binding</keyword>
<keyword id="KW-0539">Nucleus</keyword>
<keyword id="KW-0647">Proteasome</keyword>
<keyword id="KW-1185">Reference proteome</keyword>
<evidence type="ECO:0000250" key="1"/>
<evidence type="ECO:0000255" key="2"/>
<evidence type="ECO:0000256" key="3">
    <source>
        <dbReference type="SAM" id="MobiDB-lite"/>
    </source>
</evidence>
<evidence type="ECO:0000305" key="4"/>
<protein>
    <recommendedName>
        <fullName>26S proteasome regulatory subunit 6A</fullName>
    </recommendedName>
</protein>
<dbReference type="EMBL" id="AB012136">
    <property type="protein sequence ID" value="BAA88693.1"/>
    <property type="molecule type" value="Genomic_DNA"/>
</dbReference>
<dbReference type="EMBL" id="CU329670">
    <property type="protein sequence ID" value="CAB16588.2"/>
    <property type="molecule type" value="Genomic_DNA"/>
</dbReference>
<dbReference type="PIR" id="T11634">
    <property type="entry name" value="T11634"/>
</dbReference>
<dbReference type="RefSeq" id="XP_001713083.1">
    <property type="nucleotide sequence ID" value="XM_001713031.2"/>
</dbReference>
<dbReference type="SMR" id="O14126"/>
<dbReference type="BioGRID" id="280538">
    <property type="interactions" value="20"/>
</dbReference>
<dbReference type="ComplexPortal" id="CPX-9077">
    <property type="entry name" value="26S proteasome complex"/>
</dbReference>
<dbReference type="FunCoup" id="O14126">
    <property type="interactions" value="402"/>
</dbReference>
<dbReference type="STRING" id="284812.O14126"/>
<dbReference type="iPTMnet" id="O14126"/>
<dbReference type="PaxDb" id="4896-SPAC3A11.12c.1"/>
<dbReference type="EnsemblFungi" id="SPAC3A11.12c.1">
    <property type="protein sequence ID" value="SPAC3A11.12c.1:pep"/>
    <property type="gene ID" value="SPAC3A11.12c"/>
</dbReference>
<dbReference type="PomBase" id="SPAC3A11.12c"/>
<dbReference type="VEuPathDB" id="FungiDB:SPAC3A11.12c"/>
<dbReference type="eggNOG" id="KOG0652">
    <property type="taxonomic scope" value="Eukaryota"/>
</dbReference>
<dbReference type="HOGENOM" id="CLU_000688_2_4_1"/>
<dbReference type="InParanoid" id="O14126"/>
<dbReference type="OMA" id="NKISHEH"/>
<dbReference type="PhylomeDB" id="O14126"/>
<dbReference type="Reactome" id="R-SPO-1236978">
    <property type="pathway name" value="Cross-presentation of soluble exogenous antigens (endosomes)"/>
</dbReference>
<dbReference type="Reactome" id="R-SPO-350562">
    <property type="pathway name" value="Regulation of ornithine decarboxylase (ODC)"/>
</dbReference>
<dbReference type="Reactome" id="R-SPO-5687128">
    <property type="pathway name" value="MAPK6/MAPK4 signaling"/>
</dbReference>
<dbReference type="Reactome" id="R-SPO-5689603">
    <property type="pathway name" value="UCH proteinases"/>
</dbReference>
<dbReference type="Reactome" id="R-SPO-5689880">
    <property type="pathway name" value="Ub-specific processing proteases"/>
</dbReference>
<dbReference type="Reactome" id="R-SPO-6798695">
    <property type="pathway name" value="Neutrophil degranulation"/>
</dbReference>
<dbReference type="Reactome" id="R-SPO-68949">
    <property type="pathway name" value="Orc1 removal from chromatin"/>
</dbReference>
<dbReference type="Reactome" id="R-SPO-69017">
    <property type="pathway name" value="CDK-mediated phosphorylation and removal of Cdc6"/>
</dbReference>
<dbReference type="Reactome" id="R-SPO-69601">
    <property type="pathway name" value="Ubiquitin Mediated Degradation of Phosphorylated Cdc25A"/>
</dbReference>
<dbReference type="Reactome" id="R-SPO-75815">
    <property type="pathway name" value="Ubiquitin-dependent degradation of Cyclin D"/>
</dbReference>
<dbReference type="Reactome" id="R-SPO-8854050">
    <property type="pathway name" value="FBXL7 down-regulates AURKA during mitotic entry and in early mitosis"/>
</dbReference>
<dbReference type="Reactome" id="R-SPO-8948751">
    <property type="pathway name" value="Regulation of PTEN stability and activity"/>
</dbReference>
<dbReference type="Reactome" id="R-SPO-8951664">
    <property type="pathway name" value="Neddylation"/>
</dbReference>
<dbReference type="Reactome" id="R-SPO-9755511">
    <property type="pathway name" value="KEAP1-NFE2L2 pathway"/>
</dbReference>
<dbReference type="Reactome" id="R-SPO-983168">
    <property type="pathway name" value="Antigen processing: Ubiquitination &amp; Proteasome degradation"/>
</dbReference>
<dbReference type="Reactome" id="R-SPO-9907900">
    <property type="pathway name" value="Proteasome assembly"/>
</dbReference>
<dbReference type="PRO" id="PR:O14126"/>
<dbReference type="Proteomes" id="UP000002485">
    <property type="component" value="Chromosome I"/>
</dbReference>
<dbReference type="GO" id="GO:0005829">
    <property type="term" value="C:cytosol"/>
    <property type="evidence" value="ECO:0007005"/>
    <property type="project" value="PomBase"/>
</dbReference>
<dbReference type="GO" id="GO:0005634">
    <property type="term" value="C:nucleus"/>
    <property type="evidence" value="ECO:0007669"/>
    <property type="project" value="UniProtKB-SubCell"/>
</dbReference>
<dbReference type="GO" id="GO:0008540">
    <property type="term" value="C:proteasome regulatory particle, base subcomplex"/>
    <property type="evidence" value="ECO:0000314"/>
    <property type="project" value="PomBase"/>
</dbReference>
<dbReference type="GO" id="GO:0005524">
    <property type="term" value="F:ATP binding"/>
    <property type="evidence" value="ECO:0000255"/>
    <property type="project" value="PomBase"/>
</dbReference>
<dbReference type="GO" id="GO:0016887">
    <property type="term" value="F:ATP hydrolysis activity"/>
    <property type="evidence" value="ECO:0000303"/>
    <property type="project" value="PomBase"/>
</dbReference>
<dbReference type="GO" id="GO:0036402">
    <property type="term" value="F:proteasome-activating activity"/>
    <property type="evidence" value="ECO:0000318"/>
    <property type="project" value="GO_Central"/>
</dbReference>
<dbReference type="GO" id="GO:0043161">
    <property type="term" value="P:proteasome-mediated ubiquitin-dependent protein catabolic process"/>
    <property type="evidence" value="ECO:0000318"/>
    <property type="project" value="GO_Central"/>
</dbReference>
<dbReference type="FunFam" id="1.10.8.60:FF:000009">
    <property type="entry name" value="26S protease regulatory subunit 6A"/>
    <property type="match status" value="1"/>
</dbReference>
<dbReference type="FunFam" id="2.40.50.140:FF:000076">
    <property type="entry name" value="26S protease regulatory subunit 6A"/>
    <property type="match status" value="1"/>
</dbReference>
<dbReference type="FunFam" id="3.40.50.300:FF:000037">
    <property type="entry name" value="26S protease regulatory subunit 6A"/>
    <property type="match status" value="1"/>
</dbReference>
<dbReference type="Gene3D" id="1.10.8.60">
    <property type="match status" value="1"/>
</dbReference>
<dbReference type="Gene3D" id="2.40.50.140">
    <property type="entry name" value="Nucleic acid-binding proteins"/>
    <property type="match status" value="1"/>
</dbReference>
<dbReference type="Gene3D" id="3.40.50.300">
    <property type="entry name" value="P-loop containing nucleotide triphosphate hydrolases"/>
    <property type="match status" value="1"/>
</dbReference>
<dbReference type="InterPro" id="IPR050221">
    <property type="entry name" value="26S_Proteasome_ATPase"/>
</dbReference>
<dbReference type="InterPro" id="IPR003593">
    <property type="entry name" value="AAA+_ATPase"/>
</dbReference>
<dbReference type="InterPro" id="IPR041569">
    <property type="entry name" value="AAA_lid_3"/>
</dbReference>
<dbReference type="InterPro" id="IPR003959">
    <property type="entry name" value="ATPase_AAA_core"/>
</dbReference>
<dbReference type="InterPro" id="IPR003960">
    <property type="entry name" value="ATPase_AAA_CS"/>
</dbReference>
<dbReference type="InterPro" id="IPR012340">
    <property type="entry name" value="NA-bd_OB-fold"/>
</dbReference>
<dbReference type="InterPro" id="IPR027417">
    <property type="entry name" value="P-loop_NTPase"/>
</dbReference>
<dbReference type="InterPro" id="IPR032501">
    <property type="entry name" value="Prot_ATP_ID_OB_2nd"/>
</dbReference>
<dbReference type="PANTHER" id="PTHR23073">
    <property type="entry name" value="26S PROTEASOME REGULATORY SUBUNIT"/>
    <property type="match status" value="1"/>
</dbReference>
<dbReference type="Pfam" id="PF00004">
    <property type="entry name" value="AAA"/>
    <property type="match status" value="1"/>
</dbReference>
<dbReference type="Pfam" id="PF17862">
    <property type="entry name" value="AAA_lid_3"/>
    <property type="match status" value="1"/>
</dbReference>
<dbReference type="Pfam" id="PF16450">
    <property type="entry name" value="Prot_ATP_ID_OB_C"/>
    <property type="match status" value="1"/>
</dbReference>
<dbReference type="SMART" id="SM00382">
    <property type="entry name" value="AAA"/>
    <property type="match status" value="1"/>
</dbReference>
<dbReference type="SUPFAM" id="SSF52540">
    <property type="entry name" value="P-loop containing nucleoside triphosphate hydrolases"/>
    <property type="match status" value="1"/>
</dbReference>
<dbReference type="PROSITE" id="PS00674">
    <property type="entry name" value="AAA"/>
    <property type="match status" value="1"/>
</dbReference>
<reference key="1">
    <citation type="submission" date="1998-03" db="EMBL/GenBank/DDBJ databases">
        <title>Switch from mitotic to meiotic cell cycle is disturbed by strong activation of Ras-MAP kinase cascade in the fission yeast 26S proteasome-related mutants.</title>
        <authorList>
            <person name="Kitamura K."/>
            <person name="Tsujimoto K."/>
            <person name="Yamashita I."/>
            <person name="Shimoda C."/>
        </authorList>
    </citation>
    <scope>NUCLEOTIDE SEQUENCE [GENOMIC DNA]</scope>
    <source>
        <strain>ATCC 38364 / 968</strain>
    </source>
</reference>
<reference key="2">
    <citation type="journal article" date="2002" name="Nature">
        <title>The genome sequence of Schizosaccharomyces pombe.</title>
        <authorList>
            <person name="Wood V."/>
            <person name="Gwilliam R."/>
            <person name="Rajandream M.A."/>
            <person name="Lyne M.H."/>
            <person name="Lyne R."/>
            <person name="Stewart A."/>
            <person name="Sgouros J.G."/>
            <person name="Peat N."/>
            <person name="Hayles J."/>
            <person name="Baker S.G."/>
            <person name="Basham D."/>
            <person name="Bowman S."/>
            <person name="Brooks K."/>
            <person name="Brown D."/>
            <person name="Brown S."/>
            <person name="Chillingworth T."/>
            <person name="Churcher C.M."/>
            <person name="Collins M."/>
            <person name="Connor R."/>
            <person name="Cronin A."/>
            <person name="Davis P."/>
            <person name="Feltwell T."/>
            <person name="Fraser A."/>
            <person name="Gentles S."/>
            <person name="Goble A."/>
            <person name="Hamlin N."/>
            <person name="Harris D.E."/>
            <person name="Hidalgo J."/>
            <person name="Hodgson G."/>
            <person name="Holroyd S."/>
            <person name="Hornsby T."/>
            <person name="Howarth S."/>
            <person name="Huckle E.J."/>
            <person name="Hunt S."/>
            <person name="Jagels K."/>
            <person name="James K.D."/>
            <person name="Jones L."/>
            <person name="Jones M."/>
            <person name="Leather S."/>
            <person name="McDonald S."/>
            <person name="McLean J."/>
            <person name="Mooney P."/>
            <person name="Moule S."/>
            <person name="Mungall K.L."/>
            <person name="Murphy L.D."/>
            <person name="Niblett D."/>
            <person name="Odell C."/>
            <person name="Oliver K."/>
            <person name="O'Neil S."/>
            <person name="Pearson D."/>
            <person name="Quail M.A."/>
            <person name="Rabbinowitsch E."/>
            <person name="Rutherford K.M."/>
            <person name="Rutter S."/>
            <person name="Saunders D."/>
            <person name="Seeger K."/>
            <person name="Sharp S."/>
            <person name="Skelton J."/>
            <person name="Simmonds M.N."/>
            <person name="Squares R."/>
            <person name="Squares S."/>
            <person name="Stevens K."/>
            <person name="Taylor K."/>
            <person name="Taylor R.G."/>
            <person name="Tivey A."/>
            <person name="Walsh S.V."/>
            <person name="Warren T."/>
            <person name="Whitehead S."/>
            <person name="Woodward J.R."/>
            <person name="Volckaert G."/>
            <person name="Aert R."/>
            <person name="Robben J."/>
            <person name="Grymonprez B."/>
            <person name="Weltjens I."/>
            <person name="Vanstreels E."/>
            <person name="Rieger M."/>
            <person name="Schaefer M."/>
            <person name="Mueller-Auer S."/>
            <person name="Gabel C."/>
            <person name="Fuchs M."/>
            <person name="Duesterhoeft A."/>
            <person name="Fritzc C."/>
            <person name="Holzer E."/>
            <person name="Moestl D."/>
            <person name="Hilbert H."/>
            <person name="Borzym K."/>
            <person name="Langer I."/>
            <person name="Beck A."/>
            <person name="Lehrach H."/>
            <person name="Reinhardt R."/>
            <person name="Pohl T.M."/>
            <person name="Eger P."/>
            <person name="Zimmermann W."/>
            <person name="Wedler H."/>
            <person name="Wambutt R."/>
            <person name="Purnelle B."/>
            <person name="Goffeau A."/>
            <person name="Cadieu E."/>
            <person name="Dreano S."/>
            <person name="Gloux S."/>
            <person name="Lelaure V."/>
            <person name="Mottier S."/>
            <person name="Galibert F."/>
            <person name="Aves S.J."/>
            <person name="Xiang Z."/>
            <person name="Hunt C."/>
            <person name="Moore K."/>
            <person name="Hurst S.M."/>
            <person name="Lucas M."/>
            <person name="Rochet M."/>
            <person name="Gaillardin C."/>
            <person name="Tallada V.A."/>
            <person name="Garzon A."/>
            <person name="Thode G."/>
            <person name="Daga R.R."/>
            <person name="Cruzado L."/>
            <person name="Jimenez J."/>
            <person name="Sanchez M."/>
            <person name="del Rey F."/>
            <person name="Benito J."/>
            <person name="Dominguez A."/>
            <person name="Revuelta J.L."/>
            <person name="Moreno S."/>
            <person name="Armstrong J."/>
            <person name="Forsburg S.L."/>
            <person name="Cerutti L."/>
            <person name="Lowe T."/>
            <person name="McCombie W.R."/>
            <person name="Paulsen I."/>
            <person name="Potashkin J."/>
            <person name="Shpakovski G.V."/>
            <person name="Ussery D."/>
            <person name="Barrell B.G."/>
            <person name="Nurse P."/>
        </authorList>
    </citation>
    <scope>NUCLEOTIDE SEQUENCE [LARGE SCALE GENOMIC DNA]</scope>
    <source>
        <strain>972 / ATCC 24843</strain>
    </source>
</reference>
<sequence length="438" mass="48836">MSTLEELDALDQSQQGGSSNNEGLDGIEQEILAAGIDELNSRTRLLENDIKVMKSEFQRLTHEKSTMLEKIKENQEKISNNKMLPYLVGNVVEILDMQPDEVDVQESANQNSEATRVGKSAVIKTSTRQTIFLPLIGLVEPEELHPGDLIGVNKDSYLIIDKLPSEYDSRVKAMEVDEKPTERYSDIGGLSKQIEELFEAIVLPMQQADKFRKLGVKPPKGCLMFGPPGTGKTLLARACAAQSNATFLKLAAPQLVQMFIGDGAKLVRDAFALAKEKSPAIIFIDELDAIGTKRFDSEKAGDREVQRTMLELLNQLDGFSSDDRVKVIAATNRVDTLDPALLRSGRLDRKLEFPLPNEEARVGILRIHSRKMAIDDDINWEELARSTDEYNGAMLKSVCVEAGMIALRQGDTKINHEHFMDGILEVQMRKSKTLQYFA</sequence>